<proteinExistence type="inferred from homology"/>
<organism>
    <name type="scientific">Bordetella bronchiseptica (strain ATCC BAA-588 / NCTC 13252 / RB50)</name>
    <name type="common">Alcaligenes bronchisepticus</name>
    <dbReference type="NCBI Taxonomy" id="257310"/>
    <lineage>
        <taxon>Bacteria</taxon>
        <taxon>Pseudomonadati</taxon>
        <taxon>Pseudomonadota</taxon>
        <taxon>Betaproteobacteria</taxon>
        <taxon>Burkholderiales</taxon>
        <taxon>Alcaligenaceae</taxon>
        <taxon>Bordetella</taxon>
    </lineage>
</organism>
<name>GUAA_BORBR</name>
<keyword id="KW-0067">ATP-binding</keyword>
<keyword id="KW-0315">Glutamine amidotransferase</keyword>
<keyword id="KW-0332">GMP biosynthesis</keyword>
<keyword id="KW-0436">Ligase</keyword>
<keyword id="KW-0547">Nucleotide-binding</keyword>
<keyword id="KW-0658">Purine biosynthesis</keyword>
<comment type="function">
    <text evidence="1">Catalyzes the synthesis of GMP from XMP.</text>
</comment>
<comment type="catalytic activity">
    <reaction evidence="1">
        <text>XMP + L-glutamine + ATP + H2O = GMP + L-glutamate + AMP + diphosphate + 2 H(+)</text>
        <dbReference type="Rhea" id="RHEA:11680"/>
        <dbReference type="ChEBI" id="CHEBI:15377"/>
        <dbReference type="ChEBI" id="CHEBI:15378"/>
        <dbReference type="ChEBI" id="CHEBI:29985"/>
        <dbReference type="ChEBI" id="CHEBI:30616"/>
        <dbReference type="ChEBI" id="CHEBI:33019"/>
        <dbReference type="ChEBI" id="CHEBI:57464"/>
        <dbReference type="ChEBI" id="CHEBI:58115"/>
        <dbReference type="ChEBI" id="CHEBI:58359"/>
        <dbReference type="ChEBI" id="CHEBI:456215"/>
        <dbReference type="EC" id="6.3.5.2"/>
    </reaction>
</comment>
<comment type="pathway">
    <text evidence="1">Purine metabolism; GMP biosynthesis; GMP from XMP (L-Gln route): step 1/1.</text>
</comment>
<comment type="subunit">
    <text evidence="1">Homodimer.</text>
</comment>
<reference key="1">
    <citation type="journal article" date="2003" name="Nat. Genet.">
        <title>Comparative analysis of the genome sequences of Bordetella pertussis, Bordetella parapertussis and Bordetella bronchiseptica.</title>
        <authorList>
            <person name="Parkhill J."/>
            <person name="Sebaihia M."/>
            <person name="Preston A."/>
            <person name="Murphy L.D."/>
            <person name="Thomson N.R."/>
            <person name="Harris D.E."/>
            <person name="Holden M.T.G."/>
            <person name="Churcher C.M."/>
            <person name="Bentley S.D."/>
            <person name="Mungall K.L."/>
            <person name="Cerdeno-Tarraga A.-M."/>
            <person name="Temple L."/>
            <person name="James K.D."/>
            <person name="Harris B."/>
            <person name="Quail M.A."/>
            <person name="Achtman M."/>
            <person name="Atkin R."/>
            <person name="Baker S."/>
            <person name="Basham D."/>
            <person name="Bason N."/>
            <person name="Cherevach I."/>
            <person name="Chillingworth T."/>
            <person name="Collins M."/>
            <person name="Cronin A."/>
            <person name="Davis P."/>
            <person name="Doggett J."/>
            <person name="Feltwell T."/>
            <person name="Goble A."/>
            <person name="Hamlin N."/>
            <person name="Hauser H."/>
            <person name="Holroyd S."/>
            <person name="Jagels K."/>
            <person name="Leather S."/>
            <person name="Moule S."/>
            <person name="Norberczak H."/>
            <person name="O'Neil S."/>
            <person name="Ormond D."/>
            <person name="Price C."/>
            <person name="Rabbinowitsch E."/>
            <person name="Rutter S."/>
            <person name="Sanders M."/>
            <person name="Saunders D."/>
            <person name="Seeger K."/>
            <person name="Sharp S."/>
            <person name="Simmonds M."/>
            <person name="Skelton J."/>
            <person name="Squares R."/>
            <person name="Squares S."/>
            <person name="Stevens K."/>
            <person name="Unwin L."/>
            <person name="Whitehead S."/>
            <person name="Barrell B.G."/>
            <person name="Maskell D.J."/>
        </authorList>
    </citation>
    <scope>NUCLEOTIDE SEQUENCE [LARGE SCALE GENOMIC DNA]</scope>
    <source>
        <strain>ATCC BAA-588 / NCTC 13252 / RB50</strain>
    </source>
</reference>
<feature type="chain" id="PRO_0000140098" description="GMP synthase [glutamine-hydrolyzing]">
    <location>
        <begin position="1"/>
        <end position="530"/>
    </location>
</feature>
<feature type="domain" description="Glutamine amidotransferase type-1" evidence="1">
    <location>
        <begin position="4"/>
        <end position="205"/>
    </location>
</feature>
<feature type="domain" description="GMPS ATP-PPase" evidence="1">
    <location>
        <begin position="206"/>
        <end position="398"/>
    </location>
</feature>
<feature type="active site" description="Nucleophile" evidence="1">
    <location>
        <position position="84"/>
    </location>
</feature>
<feature type="active site" evidence="1">
    <location>
        <position position="179"/>
    </location>
</feature>
<feature type="active site" evidence="1">
    <location>
        <position position="181"/>
    </location>
</feature>
<feature type="binding site" evidence="1">
    <location>
        <begin position="233"/>
        <end position="239"/>
    </location>
    <ligand>
        <name>ATP</name>
        <dbReference type="ChEBI" id="CHEBI:30616"/>
    </ligand>
</feature>
<sequence>MHQRILILDYGSQVTQLIARRVREAGVYSEIHAGDVDDAFVRDQVAQGLKGIILSGSHASAYEEGSMRVPAAVFEVGVPVLGICYGMQSMAQQLGGTVSFSDHREFGYAEVRAHGHTKLLDGLADFTTDEGHGMLKVWMSHGDKVTELPPGFKLMASTASCPIAGMADEDRGFYAVQFHPEVTHTVQGKAMLARFVKDICGCEGDWNMPDYISEAVARIREQVGSDEVILGLSGGVDSSVAAALIHRAIGDQLTCVFVDHGLLRLDEGKQVMQTFAENMGVKIVHVDATSQFMGKLTGVADPEAKRKIIGREFVEVFQDEAGKLQGAKWLAQGTIYPDVIESAGAKTGKATSIKSHHNVGGLPDTLNLQLLEPLRELFKDEVRELGVALGLPPQMVYRHPFPGPGLGVRILGEVKHEYAELLRRADAIFIEELRNAKDPASGLTWYELTSQAFAVFLPVKSVGVMGDGRTYEYVVALRAVQTFDFMTADWAPLPHPLLARVSSRIINEVRGINRVVYDVSSKPPATIEWE</sequence>
<dbReference type="EC" id="6.3.5.2" evidence="1"/>
<dbReference type="EMBL" id="BX640444">
    <property type="protein sequence ID" value="CAE32823.1"/>
    <property type="molecule type" value="Genomic_DNA"/>
</dbReference>
<dbReference type="RefSeq" id="WP_003812366.1">
    <property type="nucleotide sequence ID" value="NC_002927.3"/>
</dbReference>
<dbReference type="SMR" id="Q7WK13"/>
<dbReference type="MEROPS" id="C26.957"/>
<dbReference type="GeneID" id="56478442"/>
<dbReference type="KEGG" id="bbr:BB2327"/>
<dbReference type="eggNOG" id="COG0518">
    <property type="taxonomic scope" value="Bacteria"/>
</dbReference>
<dbReference type="eggNOG" id="COG0519">
    <property type="taxonomic scope" value="Bacteria"/>
</dbReference>
<dbReference type="HOGENOM" id="CLU_014340_0_5_4"/>
<dbReference type="UniPathway" id="UPA00189">
    <property type="reaction ID" value="UER00296"/>
</dbReference>
<dbReference type="Proteomes" id="UP000001027">
    <property type="component" value="Chromosome"/>
</dbReference>
<dbReference type="GO" id="GO:0005829">
    <property type="term" value="C:cytosol"/>
    <property type="evidence" value="ECO:0007669"/>
    <property type="project" value="TreeGrafter"/>
</dbReference>
<dbReference type="GO" id="GO:0005524">
    <property type="term" value="F:ATP binding"/>
    <property type="evidence" value="ECO:0007669"/>
    <property type="project" value="UniProtKB-UniRule"/>
</dbReference>
<dbReference type="GO" id="GO:0003921">
    <property type="term" value="F:GMP synthase activity"/>
    <property type="evidence" value="ECO:0007669"/>
    <property type="project" value="InterPro"/>
</dbReference>
<dbReference type="CDD" id="cd01742">
    <property type="entry name" value="GATase1_GMP_Synthase"/>
    <property type="match status" value="1"/>
</dbReference>
<dbReference type="CDD" id="cd01997">
    <property type="entry name" value="GMP_synthase_C"/>
    <property type="match status" value="1"/>
</dbReference>
<dbReference type="FunFam" id="3.30.300.10:FF:000002">
    <property type="entry name" value="GMP synthase [glutamine-hydrolyzing]"/>
    <property type="match status" value="1"/>
</dbReference>
<dbReference type="FunFam" id="3.40.50.620:FF:000001">
    <property type="entry name" value="GMP synthase [glutamine-hydrolyzing]"/>
    <property type="match status" value="1"/>
</dbReference>
<dbReference type="FunFam" id="3.40.50.880:FF:000001">
    <property type="entry name" value="GMP synthase [glutamine-hydrolyzing]"/>
    <property type="match status" value="1"/>
</dbReference>
<dbReference type="Gene3D" id="3.30.300.10">
    <property type="match status" value="1"/>
</dbReference>
<dbReference type="Gene3D" id="3.40.50.880">
    <property type="match status" value="1"/>
</dbReference>
<dbReference type="Gene3D" id="3.40.50.620">
    <property type="entry name" value="HUPs"/>
    <property type="match status" value="1"/>
</dbReference>
<dbReference type="HAMAP" id="MF_00344">
    <property type="entry name" value="GMP_synthase"/>
    <property type="match status" value="1"/>
</dbReference>
<dbReference type="InterPro" id="IPR029062">
    <property type="entry name" value="Class_I_gatase-like"/>
</dbReference>
<dbReference type="InterPro" id="IPR017926">
    <property type="entry name" value="GATASE"/>
</dbReference>
<dbReference type="InterPro" id="IPR001674">
    <property type="entry name" value="GMP_synth_C"/>
</dbReference>
<dbReference type="InterPro" id="IPR004739">
    <property type="entry name" value="GMP_synth_GATase"/>
</dbReference>
<dbReference type="InterPro" id="IPR022955">
    <property type="entry name" value="GMP_synthase"/>
</dbReference>
<dbReference type="InterPro" id="IPR025777">
    <property type="entry name" value="GMPS_ATP_PPase_dom"/>
</dbReference>
<dbReference type="InterPro" id="IPR022310">
    <property type="entry name" value="NAD/GMP_synthase"/>
</dbReference>
<dbReference type="InterPro" id="IPR014729">
    <property type="entry name" value="Rossmann-like_a/b/a_fold"/>
</dbReference>
<dbReference type="NCBIfam" id="TIGR00884">
    <property type="entry name" value="guaA_Cterm"/>
    <property type="match status" value="1"/>
</dbReference>
<dbReference type="NCBIfam" id="TIGR00888">
    <property type="entry name" value="guaA_Nterm"/>
    <property type="match status" value="1"/>
</dbReference>
<dbReference type="NCBIfam" id="NF000848">
    <property type="entry name" value="PRK00074.1"/>
    <property type="match status" value="1"/>
</dbReference>
<dbReference type="PANTHER" id="PTHR11922:SF2">
    <property type="entry name" value="GMP SYNTHASE [GLUTAMINE-HYDROLYZING]"/>
    <property type="match status" value="1"/>
</dbReference>
<dbReference type="PANTHER" id="PTHR11922">
    <property type="entry name" value="GMP SYNTHASE-RELATED"/>
    <property type="match status" value="1"/>
</dbReference>
<dbReference type="Pfam" id="PF00117">
    <property type="entry name" value="GATase"/>
    <property type="match status" value="1"/>
</dbReference>
<dbReference type="Pfam" id="PF00958">
    <property type="entry name" value="GMP_synt_C"/>
    <property type="match status" value="1"/>
</dbReference>
<dbReference type="Pfam" id="PF02540">
    <property type="entry name" value="NAD_synthase"/>
    <property type="match status" value="1"/>
</dbReference>
<dbReference type="SUPFAM" id="SSF52402">
    <property type="entry name" value="Adenine nucleotide alpha hydrolases-like"/>
    <property type="match status" value="1"/>
</dbReference>
<dbReference type="SUPFAM" id="SSF52317">
    <property type="entry name" value="Class I glutamine amidotransferase-like"/>
    <property type="match status" value="1"/>
</dbReference>
<dbReference type="SUPFAM" id="SSF54810">
    <property type="entry name" value="GMP synthetase C-terminal dimerisation domain"/>
    <property type="match status" value="1"/>
</dbReference>
<dbReference type="PROSITE" id="PS51273">
    <property type="entry name" value="GATASE_TYPE_1"/>
    <property type="match status" value="1"/>
</dbReference>
<dbReference type="PROSITE" id="PS51553">
    <property type="entry name" value="GMPS_ATP_PPASE"/>
    <property type="match status" value="1"/>
</dbReference>
<evidence type="ECO:0000255" key="1">
    <source>
        <dbReference type="HAMAP-Rule" id="MF_00344"/>
    </source>
</evidence>
<accession>Q7WK13</accession>
<protein>
    <recommendedName>
        <fullName evidence="1">GMP synthase [glutamine-hydrolyzing]</fullName>
        <ecNumber evidence="1">6.3.5.2</ecNumber>
    </recommendedName>
    <alternativeName>
        <fullName evidence="1">GMP synthetase</fullName>
    </alternativeName>
    <alternativeName>
        <fullName evidence="1">Glutamine amidotransferase</fullName>
    </alternativeName>
</protein>
<gene>
    <name evidence="1" type="primary">guaA</name>
    <name type="ordered locus">BB2327</name>
</gene>